<keyword id="KW-0002">3D-structure</keyword>
<keyword id="KW-0131">Cell cycle</keyword>
<keyword id="KW-0132">Cell division</keyword>
<keyword id="KW-0963">Cytoplasm</keyword>
<keyword id="KW-0498">Mitosis</keyword>
<keyword id="KW-0539">Nucleus</keyword>
<keyword id="KW-0597">Phosphoprotein</keyword>
<keyword id="KW-1185">Reference proteome</keyword>
<keyword id="KW-0677">Repeat</keyword>
<keyword id="KW-0853">WD repeat</keyword>
<dbReference type="EMBL" id="Z72525">
    <property type="protein sequence ID" value="CAA96703.1"/>
    <property type="molecule type" value="Genomic_DNA"/>
</dbReference>
<dbReference type="EMBL" id="AY693078">
    <property type="protein sequence ID" value="AAT93097.1"/>
    <property type="molecule type" value="Genomic_DNA"/>
</dbReference>
<dbReference type="EMBL" id="BK006941">
    <property type="protein sequence ID" value="DAA08096.1"/>
    <property type="molecule type" value="Genomic_DNA"/>
</dbReference>
<dbReference type="PIR" id="S64005">
    <property type="entry name" value="S64005"/>
</dbReference>
<dbReference type="RefSeq" id="NP_011512.1">
    <property type="nucleotide sequence ID" value="NM_001180868.1"/>
</dbReference>
<dbReference type="PDB" id="4BH6">
    <property type="method" value="X-ray"/>
    <property type="resolution" value="2.90 A"/>
    <property type="chains" value="A/B/C/D/E/F/G/H=241-548"/>
</dbReference>
<dbReference type="PDB" id="5A31">
    <property type="method" value="EM"/>
    <property type="resolution" value="4.30 A"/>
    <property type="chains" value="R=246-546"/>
</dbReference>
<dbReference type="PDB" id="8A3T">
    <property type="method" value="EM"/>
    <property type="resolution" value="3.50 A"/>
    <property type="chains" value="B=1-566"/>
</dbReference>
<dbReference type="PDBsum" id="4BH6"/>
<dbReference type="PDBsum" id="5A31"/>
<dbReference type="PDBsum" id="8A3T"/>
<dbReference type="EMDB" id="EMD-2925"/>
<dbReference type="SMR" id="P53197"/>
<dbReference type="BioGRID" id="33242">
    <property type="interactions" value="366"/>
</dbReference>
<dbReference type="ComplexPortal" id="CPX-761">
    <property type="entry name" value="Anaphase-Promoting Complex, CDH1 variant"/>
</dbReference>
<dbReference type="DIP" id="DIP-5915N"/>
<dbReference type="ELM" id="P53197"/>
<dbReference type="FunCoup" id="P53197">
    <property type="interactions" value="961"/>
</dbReference>
<dbReference type="IntAct" id="P53197">
    <property type="interactions" value="23"/>
</dbReference>
<dbReference type="MINT" id="P53197"/>
<dbReference type="STRING" id="4932.YGL003C"/>
<dbReference type="iPTMnet" id="P53197"/>
<dbReference type="PaxDb" id="4932-YGL003C"/>
<dbReference type="PeptideAtlas" id="P53197"/>
<dbReference type="EnsemblFungi" id="YGL003C_mRNA">
    <property type="protein sequence ID" value="YGL003C"/>
    <property type="gene ID" value="YGL003C"/>
</dbReference>
<dbReference type="GeneID" id="852881"/>
<dbReference type="KEGG" id="sce:YGL003C"/>
<dbReference type="AGR" id="SGD:S000002971"/>
<dbReference type="SGD" id="S000002971">
    <property type="gene designation" value="CDH1"/>
</dbReference>
<dbReference type="VEuPathDB" id="FungiDB:YGL003C"/>
<dbReference type="eggNOG" id="KOG0305">
    <property type="taxonomic scope" value="Eukaryota"/>
</dbReference>
<dbReference type="GeneTree" id="ENSGT00950000183104"/>
<dbReference type="HOGENOM" id="CLU_014831_4_1_1"/>
<dbReference type="InParanoid" id="P53197"/>
<dbReference type="OMA" id="WSKNTDE"/>
<dbReference type="OrthoDB" id="10263272at2759"/>
<dbReference type="BioCyc" id="YEAST:G3O-30527-MONOMER"/>
<dbReference type="Reactome" id="R-SCE-176407">
    <property type="pathway name" value="Conversion from APC/C:Cdc20 to APC/C:Cdh1 in late anaphase"/>
</dbReference>
<dbReference type="Reactome" id="R-SCE-983168">
    <property type="pathway name" value="Antigen processing: Ubiquitination &amp; Proteasome degradation"/>
</dbReference>
<dbReference type="BioGRID-ORCS" id="852881">
    <property type="hits" value="3 hits in 10 CRISPR screens"/>
</dbReference>
<dbReference type="EvolutionaryTrace" id="P53197"/>
<dbReference type="PRO" id="PR:P53197"/>
<dbReference type="Proteomes" id="UP000002311">
    <property type="component" value="Chromosome VII"/>
</dbReference>
<dbReference type="RNAct" id="P53197">
    <property type="molecule type" value="protein"/>
</dbReference>
<dbReference type="GO" id="GO:0005680">
    <property type="term" value="C:anaphase-promoting complex"/>
    <property type="evidence" value="ECO:0000353"/>
    <property type="project" value="SGD"/>
</dbReference>
<dbReference type="GO" id="GO:0005737">
    <property type="term" value="C:cytoplasm"/>
    <property type="evidence" value="ECO:0000314"/>
    <property type="project" value="SGD"/>
</dbReference>
<dbReference type="GO" id="GO:0005634">
    <property type="term" value="C:nucleus"/>
    <property type="evidence" value="ECO:0000314"/>
    <property type="project" value="SGD"/>
</dbReference>
<dbReference type="GO" id="GO:0010997">
    <property type="term" value="F:anaphase-promoting complex binding"/>
    <property type="evidence" value="ECO:0000318"/>
    <property type="project" value="GO_Central"/>
</dbReference>
<dbReference type="GO" id="GO:0030332">
    <property type="term" value="F:cyclin binding"/>
    <property type="evidence" value="ECO:0000314"/>
    <property type="project" value="SGD"/>
</dbReference>
<dbReference type="GO" id="GO:1990757">
    <property type="term" value="F:ubiquitin ligase activator activity"/>
    <property type="evidence" value="ECO:0000314"/>
    <property type="project" value="SGD"/>
</dbReference>
<dbReference type="GO" id="GO:0031145">
    <property type="term" value="P:anaphase-promoting complex-dependent catabolic process"/>
    <property type="evidence" value="ECO:0000318"/>
    <property type="project" value="GO_Central"/>
</dbReference>
<dbReference type="GO" id="GO:1902426">
    <property type="term" value="P:deactivation of mitotic spindle assembly checkpoint"/>
    <property type="evidence" value="ECO:0000315"/>
    <property type="project" value="SGD"/>
</dbReference>
<dbReference type="GO" id="GO:0010697">
    <property type="term" value="P:negative regulation of mitotic spindle pole body separation"/>
    <property type="evidence" value="ECO:0000315"/>
    <property type="project" value="SGD"/>
</dbReference>
<dbReference type="GO" id="GO:1905786">
    <property type="term" value="P:positive regulation of anaphase-promoting complex-dependent catabolic process"/>
    <property type="evidence" value="ECO:0000315"/>
    <property type="project" value="SGD"/>
</dbReference>
<dbReference type="GO" id="GO:1903473">
    <property type="term" value="P:positive regulation of mitotic actomyosin contractile ring contraction"/>
    <property type="evidence" value="ECO:0000315"/>
    <property type="project" value="SGD"/>
</dbReference>
<dbReference type="GO" id="GO:0045842">
    <property type="term" value="P:positive regulation of mitotic metaphase/anaphase transition"/>
    <property type="evidence" value="ECO:0000315"/>
    <property type="project" value="SGD"/>
</dbReference>
<dbReference type="GO" id="GO:0045732">
    <property type="term" value="P:positive regulation of protein catabolic process"/>
    <property type="evidence" value="ECO:0000314"/>
    <property type="project" value="SGD"/>
</dbReference>
<dbReference type="GO" id="GO:2000060">
    <property type="term" value="P:positive regulation of ubiquitin-dependent protein catabolic process"/>
    <property type="evidence" value="ECO:0000314"/>
    <property type="project" value="SGD"/>
</dbReference>
<dbReference type="FunFam" id="2.130.10.10:FF:001029">
    <property type="entry name" value="APC/C activator protein CDH1"/>
    <property type="match status" value="1"/>
</dbReference>
<dbReference type="Gene3D" id="2.130.10.10">
    <property type="entry name" value="YVTN repeat-like/Quinoprotein amine dehydrogenase"/>
    <property type="match status" value="1"/>
</dbReference>
<dbReference type="InterPro" id="IPR033010">
    <property type="entry name" value="Cdc20/Fizzy"/>
</dbReference>
<dbReference type="InterPro" id="IPR015943">
    <property type="entry name" value="WD40/YVTN_repeat-like_dom_sf"/>
</dbReference>
<dbReference type="InterPro" id="IPR056150">
    <property type="entry name" value="WD40_CDC20-Fz"/>
</dbReference>
<dbReference type="InterPro" id="IPR019775">
    <property type="entry name" value="WD40_repeat_CS"/>
</dbReference>
<dbReference type="InterPro" id="IPR036322">
    <property type="entry name" value="WD40_repeat_dom_sf"/>
</dbReference>
<dbReference type="InterPro" id="IPR001680">
    <property type="entry name" value="WD40_rpt"/>
</dbReference>
<dbReference type="PANTHER" id="PTHR19918">
    <property type="entry name" value="CELL DIVISION CYCLE 20 CDC20 FIZZY -RELATED"/>
    <property type="match status" value="1"/>
</dbReference>
<dbReference type="PANTHER" id="PTHR19918:SF1">
    <property type="entry name" value="FIZZY-RELATED PROTEIN HOMOLOG"/>
    <property type="match status" value="1"/>
</dbReference>
<dbReference type="Pfam" id="PF24807">
    <property type="entry name" value="WD40_CDC20-Fz"/>
    <property type="match status" value="1"/>
</dbReference>
<dbReference type="SMART" id="SM00320">
    <property type="entry name" value="WD40"/>
    <property type="match status" value="5"/>
</dbReference>
<dbReference type="SUPFAM" id="SSF50978">
    <property type="entry name" value="WD40 repeat-like"/>
    <property type="match status" value="1"/>
</dbReference>
<dbReference type="PROSITE" id="PS00678">
    <property type="entry name" value="WD_REPEATS_1"/>
    <property type="match status" value="1"/>
</dbReference>
<dbReference type="PROSITE" id="PS50082">
    <property type="entry name" value="WD_REPEATS_2"/>
    <property type="match status" value="3"/>
</dbReference>
<dbReference type="PROSITE" id="PS50294">
    <property type="entry name" value="WD_REPEATS_REGION"/>
    <property type="match status" value="1"/>
</dbReference>
<name>CDH1_YEAST</name>
<accession>P53197</accession>
<accession>D6VUD5</accession>
<gene>
    <name type="primary">CDH1</name>
    <name type="synonym">HCT1</name>
    <name type="ordered locus">YGL003C</name>
</gene>
<sequence>MSTNLNPFMNNTPSSSPLKGSESKRVSKRPISSSSSASLLSSPSRRSRPSTVYGDRYIPSRTDIDFNSIVSISSMASVPALNPSSTEDQVEYQKERQAHETYNTLLKNELFGEMLSKDTVGSESSIDRIKNTRPSTRGNVHAENTTRHGYELERVSTPPPEAAGLEEFSPHSTPVTPRRLFTSQQDEITRPSSNSVRGASLLTYQQRKGRRLSAASLLQSQFFDSMSPVRPDSKQLLLSPGKQFRQIAKVPYRVLDAPSLADDFYYSLIDWSSTDVLAVALGKSIFLTDNNTGDVVHLCDTENEYTSLSWIGAGSHLAVGQANGLVEIYDVMKRKCIRTLSGHIDRVACLSWNNHVLTSGSRDHRILHRDVRMPDPFFETIESHTQEVCGLKWNVADNKLASGGNDNVVHVYEGTSKSPILTFDEHKAAVKAMAWSPHKRGVLATGGGTADRRLKIWNVNTSIKMSDIDSGSQICNMVWSKNTNELVTSHGYSKYNLTLWDCNSMDPIAILKGHSFRVLHLTLSNDGTTVVSGAGDETLRYWKLFDKPKAKVQPNSLIFDAFNQIR</sequence>
<reference key="1">
    <citation type="journal article" date="1997" name="Nature">
        <title>The nucleotide sequence of Saccharomyces cerevisiae chromosome VII.</title>
        <authorList>
            <person name="Tettelin H."/>
            <person name="Agostoni-Carbone M.L."/>
            <person name="Albermann K."/>
            <person name="Albers M."/>
            <person name="Arroyo J."/>
            <person name="Backes U."/>
            <person name="Barreiros T."/>
            <person name="Bertani I."/>
            <person name="Bjourson A.J."/>
            <person name="Brueckner M."/>
            <person name="Bruschi C.V."/>
            <person name="Carignani G."/>
            <person name="Castagnoli L."/>
            <person name="Cerdan E."/>
            <person name="Clemente M.L."/>
            <person name="Coblenz A."/>
            <person name="Coglievina M."/>
            <person name="Coissac E."/>
            <person name="Defoor E."/>
            <person name="Del Bino S."/>
            <person name="Delius H."/>
            <person name="Delneri D."/>
            <person name="de Wergifosse P."/>
            <person name="Dujon B."/>
            <person name="Durand P."/>
            <person name="Entian K.-D."/>
            <person name="Eraso P."/>
            <person name="Escribano V."/>
            <person name="Fabiani L."/>
            <person name="Fartmann B."/>
            <person name="Feroli F."/>
            <person name="Feuermann M."/>
            <person name="Frontali L."/>
            <person name="Garcia-Gonzalez M."/>
            <person name="Garcia-Saez M.I."/>
            <person name="Goffeau A."/>
            <person name="Guerreiro P."/>
            <person name="Hani J."/>
            <person name="Hansen M."/>
            <person name="Hebling U."/>
            <person name="Hernandez K."/>
            <person name="Heumann K."/>
            <person name="Hilger F."/>
            <person name="Hofmann B."/>
            <person name="Indge K.J."/>
            <person name="James C.M."/>
            <person name="Klima R."/>
            <person name="Koetter P."/>
            <person name="Kramer B."/>
            <person name="Kramer W."/>
            <person name="Lauquin G."/>
            <person name="Leuther H."/>
            <person name="Louis E.J."/>
            <person name="Maillier E."/>
            <person name="Marconi A."/>
            <person name="Martegani E."/>
            <person name="Mazon M.J."/>
            <person name="Mazzoni C."/>
            <person name="McReynolds A.D.K."/>
            <person name="Melchioretto P."/>
            <person name="Mewes H.-W."/>
            <person name="Minenkova O."/>
            <person name="Mueller-Auer S."/>
            <person name="Nawrocki A."/>
            <person name="Netter P."/>
            <person name="Neu R."/>
            <person name="Nombela C."/>
            <person name="Oliver S.G."/>
            <person name="Panzeri L."/>
            <person name="Paoluzi S."/>
            <person name="Plevani P."/>
            <person name="Portetelle D."/>
            <person name="Portillo F."/>
            <person name="Potier S."/>
            <person name="Purnelle B."/>
            <person name="Rieger M."/>
            <person name="Riles L."/>
            <person name="Rinaldi T."/>
            <person name="Robben J."/>
            <person name="Rodrigues-Pousada C."/>
            <person name="Rodriguez-Belmonte E."/>
            <person name="Rodriguez-Torres A.M."/>
            <person name="Rose M."/>
            <person name="Ruzzi M."/>
            <person name="Saliola M."/>
            <person name="Sanchez-Perez M."/>
            <person name="Schaefer B."/>
            <person name="Schaefer M."/>
            <person name="Scharfe M."/>
            <person name="Schmidheini T."/>
            <person name="Schreer A."/>
            <person name="Skala J."/>
            <person name="Souciet J.-L."/>
            <person name="Steensma H.Y."/>
            <person name="Talla E."/>
            <person name="Thierry A."/>
            <person name="Vandenbol M."/>
            <person name="van der Aart Q.J.M."/>
            <person name="Van Dyck L."/>
            <person name="Vanoni M."/>
            <person name="Verhasselt P."/>
            <person name="Voet M."/>
            <person name="Volckaert G."/>
            <person name="Wambutt R."/>
            <person name="Watson M.D."/>
            <person name="Weber N."/>
            <person name="Wedler E."/>
            <person name="Wedler H."/>
            <person name="Wipfli P."/>
            <person name="Wolf K."/>
            <person name="Wright L.F."/>
            <person name="Zaccaria P."/>
            <person name="Zimmermann M."/>
            <person name="Zollner A."/>
            <person name="Kleine K."/>
        </authorList>
    </citation>
    <scope>NUCLEOTIDE SEQUENCE [LARGE SCALE GENOMIC DNA]</scope>
    <source>
        <strain>ATCC 204508 / S288c</strain>
    </source>
</reference>
<reference key="2">
    <citation type="journal article" date="2014" name="G3 (Bethesda)">
        <title>The reference genome sequence of Saccharomyces cerevisiae: Then and now.</title>
        <authorList>
            <person name="Engel S.R."/>
            <person name="Dietrich F.S."/>
            <person name="Fisk D.G."/>
            <person name="Binkley G."/>
            <person name="Balakrishnan R."/>
            <person name="Costanzo M.C."/>
            <person name="Dwight S.S."/>
            <person name="Hitz B.C."/>
            <person name="Karra K."/>
            <person name="Nash R.S."/>
            <person name="Weng S."/>
            <person name="Wong E.D."/>
            <person name="Lloyd P."/>
            <person name="Skrzypek M.S."/>
            <person name="Miyasato S.R."/>
            <person name="Simison M."/>
            <person name="Cherry J.M."/>
        </authorList>
    </citation>
    <scope>GENOME REANNOTATION</scope>
    <source>
        <strain>ATCC 204508 / S288c</strain>
    </source>
</reference>
<reference key="3">
    <citation type="journal article" date="2007" name="Genome Res.">
        <title>Approaching a complete repository of sequence-verified protein-encoding clones for Saccharomyces cerevisiae.</title>
        <authorList>
            <person name="Hu Y."/>
            <person name="Rolfs A."/>
            <person name="Bhullar B."/>
            <person name="Murthy T.V.S."/>
            <person name="Zhu C."/>
            <person name="Berger M.F."/>
            <person name="Camargo A.A."/>
            <person name="Kelley F."/>
            <person name="McCarron S."/>
            <person name="Jepson D."/>
            <person name="Richardson A."/>
            <person name="Raphael J."/>
            <person name="Moreira D."/>
            <person name="Taycher E."/>
            <person name="Zuo D."/>
            <person name="Mohr S."/>
            <person name="Kane M.F."/>
            <person name="Williamson J."/>
            <person name="Simpson A.J.G."/>
            <person name="Bulyk M.L."/>
            <person name="Harlow E."/>
            <person name="Marsischky G."/>
            <person name="Kolodner R.D."/>
            <person name="LaBaer J."/>
        </authorList>
    </citation>
    <scope>NUCLEOTIDE SEQUENCE [GENOMIC DNA]</scope>
    <source>
        <strain>ATCC 204508 / S288c</strain>
    </source>
</reference>
<reference key="4">
    <citation type="journal article" date="1998" name="Science">
        <title>Control of cyclin ubiquitination by CDK-regulated binding of Hct1 to the anaphase promoting complex.</title>
        <authorList>
            <person name="Zachariae W."/>
            <person name="Schwab M."/>
            <person name="Nasmyth K."/>
            <person name="Seufert W."/>
        </authorList>
    </citation>
    <scope>ASSOCIATION WITH THE APC/C COMPLEX</scope>
    <scope>PHOSPHORYLATION BY CDC28</scope>
    <scope>MUTAGENESIS OF THR-12; SER-16; SER-42; THR-157; SER-169; THR-173; THR-176; SER-227 AND SER-239</scope>
</reference>
<reference key="5">
    <citation type="journal article" date="1999" name="Curr. Biol.">
        <title>Inhibitory phosphorylation of the APC regulator Hct1 is controlled by the kinase Cdc28 and the phosphatase Cdc14.</title>
        <authorList>
            <person name="Jaspersen S.L."/>
            <person name="Charles J.F."/>
            <person name="Morgan D.O."/>
        </authorList>
    </citation>
    <scope>DEPHOSPHORYLATION BY CDC14</scope>
</reference>
<reference key="6">
    <citation type="journal article" date="1999" name="EMBO J.">
        <title>Sister chromatid separation and chromosome re-duplication are regulated by different mechanisms in response to spindle damage.</title>
        <authorList>
            <person name="Alexandru G."/>
            <person name="Zachariae W."/>
            <person name="Schleiffer A."/>
            <person name="Nasmyth K."/>
        </authorList>
    </citation>
    <scope>FUNCTION AS SPINDLE CHECKPOINT TARGET</scope>
</reference>
<reference key="7">
    <citation type="journal article" date="2001" name="EMBO J.">
        <title>Yeast Hct1 recognizes the mitotic cyclin Clb2 and other substrates of the ubiquitin ligase APC.</title>
        <authorList>
            <person name="Schwab M."/>
            <person name="Neutzner M."/>
            <person name="Moecker D."/>
            <person name="Seufert W."/>
        </authorList>
    </citation>
    <scope>FUNCTION</scope>
    <scope>INTERACTION WITH CLB2; CLB3 AND CDC5</scope>
    <scope>DOMAIN C-BOX MOTIF</scope>
</reference>
<reference key="8">
    <citation type="journal article" date="2001" name="Genes Dev.">
        <title>D box and KEN box motifs in budding yeast Hsl1p are required for APC-mediated degradation and direct binding to Cdc20p and Cdh1p.</title>
        <authorList>
            <person name="Burton J.L."/>
            <person name="Solomon M.J."/>
        </authorList>
    </citation>
    <scope>INTERACTION WITH HSL1</scope>
</reference>
<reference key="9">
    <citation type="journal article" date="2001" name="J. Cell Biol.">
        <title>Activity of the APC(Cdh1) form of the anaphase-promoting complex persists until S phase and prevents the premature expression of Cdc20p.</title>
        <authorList>
            <person name="Huang J.N."/>
            <person name="Park I."/>
            <person name="Ellingson E."/>
            <person name="Littlepage L.E."/>
            <person name="Pellman D."/>
        </authorList>
    </citation>
    <scope>FUNCTION IN ASE1 AND CDC20 DEGRADATION</scope>
</reference>
<reference key="10">
    <citation type="journal article" date="2002" name="EMBO J.">
        <title>Cell cycle-dependent nuclear export of Cdh1p may contribute to the inactivation of APC/C(Cdh1).</title>
        <authorList>
            <person name="Jaquenoud M."/>
            <person name="van Drogen F."/>
            <person name="Peter M."/>
        </authorList>
    </citation>
    <scope>SUBCELLULAR LOCATION</scope>
    <scope>INTERACTION WITH MSN5 AND PSE1</scope>
</reference>
<reference key="11">
    <citation type="journal article" date="2003" name="Nature">
        <title>Targets of the cyclin-dependent kinase Cdk1.</title>
        <authorList>
            <person name="Ubersax J.A."/>
            <person name="Woodbury E.L."/>
            <person name="Quang P.N."/>
            <person name="Paraz M."/>
            <person name="Blethrow J.D."/>
            <person name="Shah K."/>
            <person name="Shokat K.M."/>
            <person name="Morgan D.O."/>
        </authorList>
    </citation>
    <scope>PHOSPHORYLATION BY CDC28</scope>
</reference>
<reference key="12">
    <citation type="journal article" date="2008" name="Mol. Cell. Proteomics">
        <title>A multidimensional chromatography technology for in-depth phosphoproteome analysis.</title>
        <authorList>
            <person name="Albuquerque C.P."/>
            <person name="Smolka M.B."/>
            <person name="Payne S.H."/>
            <person name="Bafna V."/>
            <person name="Eng J."/>
            <person name="Zhou H."/>
        </authorList>
    </citation>
    <scope>IDENTIFICATION BY MASS SPECTROMETRY [LARGE SCALE ANALYSIS]</scope>
</reference>
<reference key="13">
    <citation type="journal article" date="2009" name="Science">
        <title>Global analysis of Cdk1 substrate phosphorylation sites provides insights into evolution.</title>
        <authorList>
            <person name="Holt L.J."/>
            <person name="Tuch B.B."/>
            <person name="Villen J."/>
            <person name="Johnson A.D."/>
            <person name="Gygi S.P."/>
            <person name="Morgan D.O."/>
        </authorList>
    </citation>
    <scope>PHOSPHORYLATION [LARGE SCALE ANALYSIS] AT SER-213</scope>
    <scope>IDENTIFICATION BY MASS SPECTROMETRY [LARGE SCALE ANALYSIS]</scope>
</reference>
<evidence type="ECO:0000250" key="1"/>
<evidence type="ECO:0000256" key="2">
    <source>
        <dbReference type="SAM" id="MobiDB-lite"/>
    </source>
</evidence>
<evidence type="ECO:0000269" key="3">
    <source>
    </source>
</evidence>
<evidence type="ECO:0000269" key="4">
    <source>
    </source>
</evidence>
<evidence type="ECO:0000269" key="5">
    <source>
    </source>
</evidence>
<evidence type="ECO:0000269" key="6">
    <source>
    </source>
</evidence>
<evidence type="ECO:0000269" key="7">
    <source>
    </source>
</evidence>
<evidence type="ECO:0000269" key="8">
    <source>
    </source>
</evidence>
<evidence type="ECO:0000269" key="9">
    <source>
    </source>
</evidence>
<evidence type="ECO:0000305" key="10"/>
<evidence type="ECO:0007744" key="11">
    <source>
    </source>
</evidence>
<evidence type="ECO:0007829" key="12">
    <source>
        <dbReference type="PDB" id="4BH6"/>
    </source>
</evidence>
<evidence type="ECO:0007829" key="13">
    <source>
        <dbReference type="PDB" id="8A3T"/>
    </source>
</evidence>
<comment type="function">
    <text evidence="3 4 6">Activator protein that regulates the ubiquitin ligase activity and substrate specificity of the anaphase promoting complex/cyclosome (APC/C). During telophase and in the subsequent G1 phase of the cell cycle, recognizes and binds proteins containing a destruction box (D-box) and an additional degradation signal termed the KEN box including ASE1, CDC20, the B-type cyclins CLB2 and CLB3, the polo-like kinase CDC5 and HSL1, and recruits them in a C-box-dependent manner to the APC/C for ubiquitination and subsequent proteolysis. Required for exit from mitosis, cytokinesis and formation of prereplicative complexes in G1. Probably is the target of a BUB2-dependent spindle checkpoint pathway.</text>
</comment>
<comment type="subunit">
    <text evidence="5 6 7">Associates with the APC/C complex. Interacts with CLB2, CLB3, CDC5, HSL1, MSN5 and PSE1.</text>
</comment>
<comment type="interaction">
    <interactant intactId="EBI-23684">
        <id>P53197</id>
    </interactant>
    <interactant intactId="EBI-2345174">
        <id>Q08981</id>
        <label>ACM1</label>
    </interactant>
    <organismsDiffer>false</organismsDiffer>
    <experiments>8</experiments>
</comment>
<comment type="subcellular location">
    <subcellularLocation>
        <location evidence="7">Cytoplasm</location>
    </subcellularLocation>
    <subcellularLocation>
        <location evidence="7">Nucleus</location>
    </subcellularLocation>
    <text>Nuclear import and export are mediated by the importin PSE1 and the exportin MSN5.</text>
</comment>
<comment type="domain">
    <text evidence="1">The C-box is required for the association with the APC/C complex.</text>
</comment>
<comment type="PTM">
    <text evidence="8 9">Phosphorylated at multiple sites by CDC28, probably in its CLB5 bound form, in S, G2 and M phase of the cell cycle, thereby blocking the association of CDH1 to the APC/C and promoting nuclear export of CDH1 by MSN5. Dephosphorylated and activated by CDC14 in late anaphase, which may be necessary for PSE1-dependent nuclear localization.</text>
</comment>
<comment type="similarity">
    <text evidence="10">Belongs to the WD repeat CDC20/Fizzy family.</text>
</comment>
<protein>
    <recommendedName>
        <fullName>APC/C activator protein CDH1</fullName>
    </recommendedName>
    <alternativeName>
        <fullName>CDC20 homolog 1</fullName>
    </alternativeName>
    <alternativeName>
        <fullName>Homolog of CDC twenty 1</fullName>
    </alternativeName>
</protein>
<organism>
    <name type="scientific">Saccharomyces cerevisiae (strain ATCC 204508 / S288c)</name>
    <name type="common">Baker's yeast</name>
    <dbReference type="NCBI Taxonomy" id="559292"/>
    <lineage>
        <taxon>Eukaryota</taxon>
        <taxon>Fungi</taxon>
        <taxon>Dikarya</taxon>
        <taxon>Ascomycota</taxon>
        <taxon>Saccharomycotina</taxon>
        <taxon>Saccharomycetes</taxon>
        <taxon>Saccharomycetales</taxon>
        <taxon>Saccharomycetaceae</taxon>
        <taxon>Saccharomyces</taxon>
    </lineage>
</organism>
<feature type="chain" id="PRO_0000050904" description="APC/C activator protein CDH1">
    <location>
        <begin position="1"/>
        <end position="566"/>
    </location>
</feature>
<feature type="repeat" description="WD 1">
    <location>
        <begin position="258"/>
        <end position="298"/>
    </location>
</feature>
<feature type="repeat" description="WD 2">
    <location>
        <begin position="300"/>
        <end position="339"/>
    </location>
</feature>
<feature type="repeat" description="WD 3">
    <location>
        <begin position="342"/>
        <end position="379"/>
    </location>
</feature>
<feature type="repeat" description="WD 4">
    <location>
        <begin position="383"/>
        <end position="422"/>
    </location>
</feature>
<feature type="repeat" description="WD 5">
    <location>
        <begin position="425"/>
        <end position="467"/>
    </location>
</feature>
<feature type="repeat" description="WD 6">
    <location>
        <begin position="469"/>
        <end position="510"/>
    </location>
</feature>
<feature type="repeat" description="WD 7">
    <location>
        <begin position="513"/>
        <end position="552"/>
    </location>
</feature>
<feature type="region of interest" description="Disordered" evidence="2">
    <location>
        <begin position="1"/>
        <end position="56"/>
    </location>
</feature>
<feature type="short sequence motif" description="C-box">
    <location>
        <begin position="55"/>
        <end position="61"/>
    </location>
</feature>
<feature type="compositionally biased region" description="Polar residues" evidence="2">
    <location>
        <begin position="1"/>
        <end position="18"/>
    </location>
</feature>
<feature type="compositionally biased region" description="Low complexity" evidence="2">
    <location>
        <begin position="29"/>
        <end position="44"/>
    </location>
</feature>
<feature type="modified residue" description="Phosphoserine" evidence="11">
    <location>
        <position position="213"/>
    </location>
</feature>
<feature type="mutagenesis site" description="Abolishes phosphorylation; when associated with A-16; A-42; A-157; A-169; A-173; A-176; A-227 and A-239." evidence="9">
    <original>T</original>
    <variation>A</variation>
    <location>
        <position position="12"/>
    </location>
</feature>
<feature type="mutagenesis site" description="Abolishes phosphorylation; when associated with A-12; A-42; A-157; A-169; A-173; A-176; A-227 and A-239." evidence="9">
    <original>S</original>
    <variation>A</variation>
    <location>
        <position position="16"/>
    </location>
</feature>
<feature type="mutagenesis site" description="Abolishes phosphorylation; when associated with A-12; A-16; A-157; A-169; A-173; A-176; A-227 and A-239." evidence="9">
    <original>S</original>
    <variation>A</variation>
    <location>
        <position position="42"/>
    </location>
</feature>
<feature type="mutagenesis site" description="Abolishes phosphorylation; when associated with A-12; A-16; A-42; A-169; A-173; A-176; A-227 and A-239." evidence="9">
    <original>T</original>
    <variation>A</variation>
    <location>
        <position position="157"/>
    </location>
</feature>
<feature type="mutagenesis site" description="Abolishes phosphorylation; when associated with A-12; A-16; A-42; A-157; A-173; A-176; A-227 and A-239." evidence="9">
    <original>S</original>
    <variation>A</variation>
    <location>
        <position position="169"/>
    </location>
</feature>
<feature type="mutagenesis site" description="Abolishes phosphorylation; when associated with A-12; A-16; A-42; A-157; A-169; A-176; A-227 and A-239." evidence="9">
    <original>T</original>
    <variation>A</variation>
    <location>
        <position position="173"/>
    </location>
</feature>
<feature type="mutagenesis site" description="Abolishes phosphorylation; when associated with A-12; A-16; A-42; A-157; A-169; A-173; A-227 and A-239." evidence="9">
    <original>T</original>
    <variation>A</variation>
    <location>
        <position position="176"/>
    </location>
</feature>
<feature type="mutagenesis site" description="Abolishes phosphorylation; when associated with A-12; A-16; A-42; A-157; A-169; A-173; A-176 and A-239." evidence="9">
    <original>S</original>
    <variation>A</variation>
    <location>
        <position position="227"/>
    </location>
</feature>
<feature type="mutagenesis site" description="Abolishes phosphorylation; when associated with A-12; A-16; A-42; A-157; A-169; A-173; A-176 and A-227." evidence="9">
    <original>S</original>
    <variation>A</variation>
    <location>
        <position position="239"/>
    </location>
</feature>
<feature type="strand" evidence="13">
    <location>
        <begin position="56"/>
        <end position="58"/>
    </location>
</feature>
<feature type="helix" evidence="13">
    <location>
        <begin position="66"/>
        <end position="73"/>
    </location>
</feature>
<feature type="helix" evidence="13">
    <location>
        <begin position="91"/>
        <end position="110"/>
    </location>
</feature>
<feature type="helix" evidence="13">
    <location>
        <begin position="113"/>
        <end position="117"/>
    </location>
</feature>
<feature type="strand" evidence="13">
    <location>
        <begin position="120"/>
        <end position="122"/>
    </location>
</feature>
<feature type="helix" evidence="13">
    <location>
        <begin position="125"/>
        <end position="131"/>
    </location>
</feature>
<feature type="strand" evidence="13">
    <location>
        <begin position="201"/>
        <end position="205"/>
    </location>
</feature>
<feature type="helix" evidence="13">
    <location>
        <begin position="215"/>
        <end position="225"/>
    </location>
</feature>
<feature type="helix" evidence="13">
    <location>
        <begin position="231"/>
        <end position="238"/>
    </location>
</feature>
<feature type="strand" evidence="12">
    <location>
        <begin position="252"/>
        <end position="256"/>
    </location>
</feature>
<feature type="strand" evidence="12">
    <location>
        <begin position="269"/>
        <end position="271"/>
    </location>
</feature>
<feature type="strand" evidence="12">
    <location>
        <begin position="275"/>
        <end position="281"/>
    </location>
</feature>
<feature type="strand" evidence="12">
    <location>
        <begin position="284"/>
        <end position="289"/>
    </location>
</feature>
<feature type="turn" evidence="12">
    <location>
        <begin position="290"/>
        <end position="292"/>
    </location>
</feature>
<feature type="strand" evidence="12">
    <location>
        <begin position="295"/>
        <end position="300"/>
    </location>
</feature>
<feature type="strand" evidence="12">
    <location>
        <begin position="305"/>
        <end position="310"/>
    </location>
</feature>
<feature type="strand" evidence="12">
    <location>
        <begin position="314"/>
        <end position="321"/>
    </location>
</feature>
<feature type="strand" evidence="12">
    <location>
        <begin position="326"/>
        <end position="330"/>
    </location>
</feature>
<feature type="turn" evidence="12">
    <location>
        <begin position="331"/>
        <end position="334"/>
    </location>
</feature>
<feature type="strand" evidence="12">
    <location>
        <begin position="335"/>
        <end position="340"/>
    </location>
</feature>
<feature type="strand" evidence="12">
    <location>
        <begin position="347"/>
        <end position="353"/>
    </location>
</feature>
<feature type="strand" evidence="12">
    <location>
        <begin position="356"/>
        <end position="364"/>
    </location>
</feature>
<feature type="strand" evidence="12">
    <location>
        <begin position="366"/>
        <end position="370"/>
    </location>
</feature>
<feature type="strand" evidence="12">
    <location>
        <begin position="373"/>
        <end position="376"/>
    </location>
</feature>
<feature type="strand" evidence="12">
    <location>
        <begin position="378"/>
        <end position="381"/>
    </location>
</feature>
<feature type="strand" evidence="12">
    <location>
        <begin position="388"/>
        <end position="393"/>
    </location>
</feature>
<feature type="strand" evidence="12">
    <location>
        <begin position="395"/>
        <end position="397"/>
    </location>
</feature>
<feature type="strand" evidence="12">
    <location>
        <begin position="399"/>
        <end position="404"/>
    </location>
</feature>
<feature type="strand" evidence="12">
    <location>
        <begin position="409"/>
        <end position="413"/>
    </location>
</feature>
<feature type="strand" evidence="12">
    <location>
        <begin position="420"/>
        <end position="423"/>
    </location>
</feature>
<feature type="strand" evidence="12">
    <location>
        <begin position="430"/>
        <end position="435"/>
    </location>
</feature>
<feature type="strand" evidence="12">
    <location>
        <begin position="437"/>
        <end position="439"/>
    </location>
</feature>
<feature type="strand" evidence="12">
    <location>
        <begin position="442"/>
        <end position="447"/>
    </location>
</feature>
<feature type="turn" evidence="12">
    <location>
        <begin position="449"/>
        <end position="451"/>
    </location>
</feature>
<feature type="strand" evidence="12">
    <location>
        <begin position="453"/>
        <end position="458"/>
    </location>
</feature>
<feature type="turn" evidence="12">
    <location>
        <begin position="459"/>
        <end position="462"/>
    </location>
</feature>
<feature type="strand" evidence="12">
    <location>
        <begin position="463"/>
        <end position="469"/>
    </location>
</feature>
<feature type="strand" evidence="12">
    <location>
        <begin position="474"/>
        <end position="479"/>
    </location>
</feature>
<feature type="strand" evidence="12">
    <location>
        <begin position="481"/>
        <end position="484"/>
    </location>
</feature>
<feature type="strand" evidence="12">
    <location>
        <begin position="486"/>
        <end position="490"/>
    </location>
</feature>
<feature type="strand" evidence="13">
    <location>
        <begin position="492"/>
        <end position="494"/>
    </location>
</feature>
<feature type="strand" evidence="12">
    <location>
        <begin position="497"/>
        <end position="500"/>
    </location>
</feature>
<feature type="strand" evidence="12">
    <location>
        <begin position="502"/>
        <end position="504"/>
    </location>
</feature>
<feature type="strand" evidence="12">
    <location>
        <begin position="507"/>
        <end position="511"/>
    </location>
</feature>
<feature type="strand" evidence="12">
    <location>
        <begin position="518"/>
        <end position="523"/>
    </location>
</feature>
<feature type="strand" evidence="12">
    <location>
        <begin position="527"/>
        <end position="534"/>
    </location>
</feature>
<feature type="turn" evidence="12">
    <location>
        <begin position="535"/>
        <end position="537"/>
    </location>
</feature>
<feature type="strand" evidence="12">
    <location>
        <begin position="538"/>
        <end position="543"/>
    </location>
</feature>
<feature type="helix" evidence="13">
    <location>
        <begin position="558"/>
        <end position="562"/>
    </location>
</feature>
<proteinExistence type="evidence at protein level"/>